<feature type="chain" id="PRO_0000157398" description="UPF0324 membrane protein BPP3732">
    <location>
        <begin position="1"/>
        <end position="348"/>
    </location>
</feature>
<feature type="transmembrane region" description="Helical" evidence="1">
    <location>
        <begin position="20"/>
        <end position="39"/>
    </location>
</feature>
<feature type="transmembrane region" description="Helical" evidence="1">
    <location>
        <begin position="43"/>
        <end position="62"/>
    </location>
</feature>
<feature type="transmembrane region" description="Helical" evidence="1">
    <location>
        <begin position="98"/>
        <end position="120"/>
    </location>
</feature>
<feature type="transmembrane region" description="Helical" evidence="1">
    <location>
        <begin position="135"/>
        <end position="157"/>
    </location>
</feature>
<feature type="transmembrane region" description="Helical" evidence="1">
    <location>
        <begin position="164"/>
        <end position="186"/>
    </location>
</feature>
<feature type="transmembrane region" description="Helical" evidence="1">
    <location>
        <begin position="196"/>
        <end position="215"/>
    </location>
</feature>
<feature type="transmembrane region" description="Helical" evidence="1">
    <location>
        <begin position="235"/>
        <end position="257"/>
    </location>
</feature>
<feature type="transmembrane region" description="Helical" evidence="1">
    <location>
        <begin position="267"/>
        <end position="286"/>
    </location>
</feature>
<feature type="transmembrane region" description="Helical" evidence="1">
    <location>
        <begin position="299"/>
        <end position="318"/>
    </location>
</feature>
<feature type="transmembrane region" description="Helical" evidence="1">
    <location>
        <begin position="322"/>
        <end position="344"/>
    </location>
</feature>
<evidence type="ECO:0000255" key="1"/>
<evidence type="ECO:0000305" key="2"/>
<keyword id="KW-1003">Cell membrane</keyword>
<keyword id="KW-0472">Membrane</keyword>
<keyword id="KW-0812">Transmembrane</keyword>
<keyword id="KW-1133">Transmembrane helix</keyword>
<accession>Q7W4D4</accession>
<name>Y3732_BORPA</name>
<sequence length="348" mass="36493">MTTTTSTLPLPTPWRDKLNGILFVALMAAAVVQLADLPFIRQFGFSPLVVGIVCGMLYGNFLRGTMPADWGAGVHFTARRLLRIAVAFYGLNISIQQIAAVGLPGLAVSVGVVASTLLIGTVAGQRLLGLDRDTAMLTAAGSAICGAAAVLAFEPTLRAAPHKSAVAVATVVLFGTLSMFLYPVIYHAGWLPFDTQALGIYIGGTVHEVAQVVGAASNIDPATTEVATIVKMTRVALLVPVLLVLGFWLRASAAAGADGKSHAKLPVPWFAIGFLVLAIVNSLDILPSDLVTAIRKLDVFVLTMAMTALGIETRFAQIRKAGPRVMALGLVLYAWLVFGGYGIVKLAT</sequence>
<protein>
    <recommendedName>
        <fullName>UPF0324 membrane protein BPP3732</fullName>
    </recommendedName>
</protein>
<gene>
    <name type="ordered locus">BPP3732</name>
</gene>
<organism>
    <name type="scientific">Bordetella parapertussis (strain 12822 / ATCC BAA-587 / NCTC 13253)</name>
    <dbReference type="NCBI Taxonomy" id="257311"/>
    <lineage>
        <taxon>Bacteria</taxon>
        <taxon>Pseudomonadati</taxon>
        <taxon>Pseudomonadota</taxon>
        <taxon>Betaproteobacteria</taxon>
        <taxon>Burkholderiales</taxon>
        <taxon>Alcaligenaceae</taxon>
        <taxon>Bordetella</taxon>
    </lineage>
</organism>
<dbReference type="EMBL" id="BX640434">
    <property type="protein sequence ID" value="CAE39015.1"/>
    <property type="molecule type" value="Genomic_DNA"/>
</dbReference>
<dbReference type="RefSeq" id="WP_010929220.1">
    <property type="nucleotide sequence ID" value="NC_002928.3"/>
</dbReference>
<dbReference type="KEGG" id="bpa:BPP3732"/>
<dbReference type="HOGENOM" id="CLU_033541_0_0_4"/>
<dbReference type="Proteomes" id="UP000001421">
    <property type="component" value="Chromosome"/>
</dbReference>
<dbReference type="GO" id="GO:0005886">
    <property type="term" value="C:plasma membrane"/>
    <property type="evidence" value="ECO:0007669"/>
    <property type="project" value="UniProtKB-SubCell"/>
</dbReference>
<dbReference type="InterPro" id="IPR018383">
    <property type="entry name" value="UPF0324_pro"/>
</dbReference>
<dbReference type="InterPro" id="IPR004630">
    <property type="entry name" value="UPF0324_YeiH-like"/>
</dbReference>
<dbReference type="NCBIfam" id="TIGR00698">
    <property type="entry name" value="YeiH family putative sulfate export transporter"/>
    <property type="match status" value="1"/>
</dbReference>
<dbReference type="PANTHER" id="PTHR30106">
    <property type="entry name" value="INNER MEMBRANE PROTEIN YEIH-RELATED"/>
    <property type="match status" value="1"/>
</dbReference>
<dbReference type="PANTHER" id="PTHR30106:SF2">
    <property type="entry name" value="UPF0324 INNER MEMBRANE PROTEIN YEIH"/>
    <property type="match status" value="1"/>
</dbReference>
<dbReference type="Pfam" id="PF03601">
    <property type="entry name" value="Cons_hypoth698"/>
    <property type="match status" value="1"/>
</dbReference>
<comment type="subcellular location">
    <subcellularLocation>
        <location evidence="2">Cell membrane</location>
        <topology evidence="2">Multi-pass membrane protein</topology>
    </subcellularLocation>
</comment>
<comment type="similarity">
    <text evidence="2">Belongs to the UPF0324 family.</text>
</comment>
<reference key="1">
    <citation type="journal article" date="2003" name="Nat. Genet.">
        <title>Comparative analysis of the genome sequences of Bordetella pertussis, Bordetella parapertussis and Bordetella bronchiseptica.</title>
        <authorList>
            <person name="Parkhill J."/>
            <person name="Sebaihia M."/>
            <person name="Preston A."/>
            <person name="Murphy L.D."/>
            <person name="Thomson N.R."/>
            <person name="Harris D.E."/>
            <person name="Holden M.T.G."/>
            <person name="Churcher C.M."/>
            <person name="Bentley S.D."/>
            <person name="Mungall K.L."/>
            <person name="Cerdeno-Tarraga A.-M."/>
            <person name="Temple L."/>
            <person name="James K.D."/>
            <person name="Harris B."/>
            <person name="Quail M.A."/>
            <person name="Achtman M."/>
            <person name="Atkin R."/>
            <person name="Baker S."/>
            <person name="Basham D."/>
            <person name="Bason N."/>
            <person name="Cherevach I."/>
            <person name="Chillingworth T."/>
            <person name="Collins M."/>
            <person name="Cronin A."/>
            <person name="Davis P."/>
            <person name="Doggett J."/>
            <person name="Feltwell T."/>
            <person name="Goble A."/>
            <person name="Hamlin N."/>
            <person name="Hauser H."/>
            <person name="Holroyd S."/>
            <person name="Jagels K."/>
            <person name="Leather S."/>
            <person name="Moule S."/>
            <person name="Norberczak H."/>
            <person name="O'Neil S."/>
            <person name="Ormond D."/>
            <person name="Price C."/>
            <person name="Rabbinowitsch E."/>
            <person name="Rutter S."/>
            <person name="Sanders M."/>
            <person name="Saunders D."/>
            <person name="Seeger K."/>
            <person name="Sharp S."/>
            <person name="Simmonds M."/>
            <person name="Skelton J."/>
            <person name="Squares R."/>
            <person name="Squares S."/>
            <person name="Stevens K."/>
            <person name="Unwin L."/>
            <person name="Whitehead S."/>
            <person name="Barrell B.G."/>
            <person name="Maskell D.J."/>
        </authorList>
    </citation>
    <scope>NUCLEOTIDE SEQUENCE [LARGE SCALE GENOMIC DNA]</scope>
    <source>
        <strain>12822 / ATCC BAA-587 / NCTC 13253</strain>
    </source>
</reference>
<proteinExistence type="inferred from homology"/>